<accession>A6QLT4</accession>
<gene>
    <name evidence="1" type="primary">MTM1</name>
</gene>
<proteinExistence type="evidence at transcript level"/>
<keyword id="KW-1003">Cell membrane</keyword>
<keyword id="KW-0966">Cell projection</keyword>
<keyword id="KW-0963">Cytoplasm</keyword>
<keyword id="KW-0967">Endosome</keyword>
<keyword id="KW-0378">Hydrolase</keyword>
<keyword id="KW-0443">Lipid metabolism</keyword>
<keyword id="KW-0472">Membrane</keyword>
<keyword id="KW-0597">Phosphoprotein</keyword>
<keyword id="KW-0904">Protein phosphatase</keyword>
<keyword id="KW-0653">Protein transport</keyword>
<keyword id="KW-1185">Reference proteome</keyword>
<keyword id="KW-0813">Transport</keyword>
<protein>
    <recommendedName>
        <fullName evidence="1">Myotubularin</fullName>
        <ecNumber evidence="1">3.1.3.95</ecNumber>
    </recommendedName>
    <alternativeName>
        <fullName evidence="1">Phosphatidylinositol-3,5-bisphosphate 3-phosphatase</fullName>
    </alternativeName>
    <alternativeName>
        <fullName evidence="1">Phosphatidylinositol-3-phosphate phosphatase</fullName>
    </alternativeName>
</protein>
<feature type="chain" id="PRO_0000328655" description="Myotubularin">
    <location>
        <begin position="1"/>
        <end position="603"/>
    </location>
</feature>
<feature type="domain" description="GRAM">
    <location>
        <begin position="29"/>
        <end position="97"/>
    </location>
</feature>
<feature type="domain" description="Myotubularin phosphatase" evidence="4">
    <location>
        <begin position="163"/>
        <end position="538"/>
    </location>
</feature>
<feature type="region of interest" description="Disordered" evidence="6">
    <location>
        <begin position="1"/>
        <end position="32"/>
    </location>
</feature>
<feature type="region of interest" description="Disordered" evidence="6">
    <location>
        <begin position="580"/>
        <end position="603"/>
    </location>
</feature>
<feature type="compositionally biased region" description="Polar residues" evidence="6">
    <location>
        <begin position="1"/>
        <end position="13"/>
    </location>
</feature>
<feature type="compositionally biased region" description="Basic and acidic residues" evidence="6">
    <location>
        <begin position="14"/>
        <end position="32"/>
    </location>
</feature>
<feature type="compositionally biased region" description="Low complexity" evidence="6">
    <location>
        <begin position="583"/>
        <end position="593"/>
    </location>
</feature>
<feature type="active site" description="Phosphocysteine intermediate" evidence="5">
    <location>
        <position position="375"/>
    </location>
</feature>
<feature type="binding site" evidence="2">
    <location>
        <position position="288"/>
    </location>
    <ligand>
        <name>a 1,2-diacyl-sn-glycero-3-phospho-(1D-myo-inositol-3,5-bisphosphate)</name>
        <dbReference type="ChEBI" id="CHEBI:57923"/>
    </ligand>
</feature>
<feature type="binding site" evidence="2">
    <location>
        <position position="288"/>
    </location>
    <ligand>
        <name>a 1,2-diacyl-sn-glycero-3-phospho-(1D-myo-inositol-3-phosphate)</name>
        <dbReference type="ChEBI" id="CHEBI:58088"/>
    </ligand>
</feature>
<feature type="binding site" evidence="2">
    <location>
        <position position="313"/>
    </location>
    <ligand>
        <name>a 1,2-diacyl-sn-glycero-3-phospho-(1D-myo-inositol-3,5-bisphosphate)</name>
        <dbReference type="ChEBI" id="CHEBI:57923"/>
    </ligand>
</feature>
<feature type="binding site" evidence="2">
    <location>
        <position position="313"/>
    </location>
    <ligand>
        <name>a 1,2-diacyl-sn-glycero-3-phospho-(1D-myo-inositol-3-phosphate)</name>
        <dbReference type="ChEBI" id="CHEBI:58088"/>
    </ligand>
</feature>
<feature type="binding site" evidence="2">
    <location>
        <position position="314"/>
    </location>
    <ligand>
        <name>a 1,2-diacyl-sn-glycero-3-phospho-(1D-myo-inositol-3,5-bisphosphate)</name>
        <dbReference type="ChEBI" id="CHEBI:57923"/>
    </ligand>
</feature>
<feature type="binding site" evidence="2">
    <location>
        <position position="314"/>
    </location>
    <ligand>
        <name>a 1,2-diacyl-sn-glycero-3-phospho-(1D-myo-inositol-3-phosphate)</name>
        <dbReference type="ChEBI" id="CHEBI:58088"/>
    </ligand>
</feature>
<feature type="binding site" evidence="2">
    <location>
        <position position="376"/>
    </location>
    <ligand>
        <name>a 1,2-diacyl-sn-glycero-3-phospho-(1D-myo-inositol-3,5-bisphosphate)</name>
        <dbReference type="ChEBI" id="CHEBI:57923"/>
    </ligand>
</feature>
<feature type="binding site" evidence="2">
    <location>
        <position position="376"/>
    </location>
    <ligand>
        <name>a 1,2-diacyl-sn-glycero-3-phospho-(1D-myo-inositol-3-phosphate)</name>
        <dbReference type="ChEBI" id="CHEBI:58088"/>
    </ligand>
</feature>
<feature type="binding site" evidence="2">
    <location>
        <position position="377"/>
    </location>
    <ligand>
        <name>a 1,2-diacyl-sn-glycero-3-phospho-(1D-myo-inositol-3,5-bisphosphate)</name>
        <dbReference type="ChEBI" id="CHEBI:57923"/>
    </ligand>
</feature>
<feature type="binding site" evidence="2">
    <location>
        <position position="377"/>
    </location>
    <ligand>
        <name>a 1,2-diacyl-sn-glycero-3-phospho-(1D-myo-inositol-3-phosphate)</name>
        <dbReference type="ChEBI" id="CHEBI:58088"/>
    </ligand>
</feature>
<feature type="binding site" evidence="2">
    <location>
        <position position="378"/>
    </location>
    <ligand>
        <name>a 1,2-diacyl-sn-glycero-3-phospho-(1D-myo-inositol-3,5-bisphosphate)</name>
        <dbReference type="ChEBI" id="CHEBI:57923"/>
    </ligand>
</feature>
<feature type="binding site" evidence="2">
    <location>
        <position position="378"/>
    </location>
    <ligand>
        <name>a 1,2-diacyl-sn-glycero-3-phospho-(1D-myo-inositol-3-phosphate)</name>
        <dbReference type="ChEBI" id="CHEBI:58088"/>
    </ligand>
</feature>
<feature type="binding site" evidence="2">
    <location>
        <position position="379"/>
    </location>
    <ligand>
        <name>a 1,2-diacyl-sn-glycero-3-phospho-(1D-myo-inositol-3,5-bisphosphate)</name>
        <dbReference type="ChEBI" id="CHEBI:57923"/>
    </ligand>
</feature>
<feature type="binding site" evidence="2">
    <location>
        <position position="379"/>
    </location>
    <ligand>
        <name>a 1,2-diacyl-sn-glycero-3-phospho-(1D-myo-inositol-3-phosphate)</name>
        <dbReference type="ChEBI" id="CHEBI:58088"/>
    </ligand>
</feature>
<feature type="binding site" evidence="2">
    <location>
        <position position="380"/>
    </location>
    <ligand>
        <name>a 1,2-diacyl-sn-glycero-3-phospho-(1D-myo-inositol-3,5-bisphosphate)</name>
        <dbReference type="ChEBI" id="CHEBI:57923"/>
    </ligand>
</feature>
<feature type="binding site" evidence="2">
    <location>
        <position position="380"/>
    </location>
    <ligand>
        <name>a 1,2-diacyl-sn-glycero-3-phospho-(1D-myo-inositol-3-phosphate)</name>
        <dbReference type="ChEBI" id="CHEBI:58088"/>
    </ligand>
</feature>
<feature type="binding site" evidence="2">
    <location>
        <position position="381"/>
    </location>
    <ligand>
        <name>a 1,2-diacyl-sn-glycero-3-phospho-(1D-myo-inositol-3,5-bisphosphate)</name>
        <dbReference type="ChEBI" id="CHEBI:57923"/>
    </ligand>
</feature>
<feature type="binding site" evidence="2">
    <location>
        <position position="381"/>
    </location>
    <ligand>
        <name>a 1,2-diacyl-sn-glycero-3-phospho-(1D-myo-inositol-3-phosphate)</name>
        <dbReference type="ChEBI" id="CHEBI:58088"/>
    </ligand>
</feature>
<feature type="binding site" evidence="2">
    <location>
        <position position="417"/>
    </location>
    <ligand>
        <name>a 1,2-diacyl-sn-glycero-3-phospho-(1D-myo-inositol-3,5-bisphosphate)</name>
        <dbReference type="ChEBI" id="CHEBI:57923"/>
    </ligand>
</feature>
<feature type="binding site" evidence="2">
    <location>
        <position position="421"/>
    </location>
    <ligand>
        <name>a 1,2-diacyl-sn-glycero-3-phospho-(1D-myo-inositol-3,5-bisphosphate)</name>
        <dbReference type="ChEBI" id="CHEBI:57923"/>
    </ligand>
</feature>
<feature type="binding site" evidence="2">
    <location>
        <position position="421"/>
    </location>
    <ligand>
        <name>a 1,2-diacyl-sn-glycero-3-phospho-(1D-myo-inositol-3-phosphate)</name>
        <dbReference type="ChEBI" id="CHEBI:58088"/>
    </ligand>
</feature>
<feature type="modified residue" description="Phosphoserine" evidence="1">
    <location>
        <position position="13"/>
    </location>
</feature>
<feature type="modified residue" description="Phosphoserine" evidence="1">
    <location>
        <position position="18"/>
    </location>
</feature>
<feature type="modified residue" description="Phosphothreonine" evidence="1">
    <location>
        <position position="495"/>
    </location>
</feature>
<feature type="modified residue" description="Phosphoserine" evidence="1">
    <location>
        <position position="588"/>
    </location>
</feature>
<evidence type="ECO:0000250" key="1">
    <source>
        <dbReference type="UniProtKB" id="Q13496"/>
    </source>
</evidence>
<evidence type="ECO:0000250" key="2">
    <source>
        <dbReference type="UniProtKB" id="Q13614"/>
    </source>
</evidence>
<evidence type="ECO:0000250" key="3">
    <source>
        <dbReference type="UniProtKB" id="Q9Z2C5"/>
    </source>
</evidence>
<evidence type="ECO:0000255" key="4">
    <source>
        <dbReference type="PROSITE-ProRule" id="PRU00669"/>
    </source>
</evidence>
<evidence type="ECO:0000255" key="5">
    <source>
        <dbReference type="PROSITE-ProRule" id="PRU10044"/>
    </source>
</evidence>
<evidence type="ECO:0000256" key="6">
    <source>
        <dbReference type="SAM" id="MobiDB-lite"/>
    </source>
</evidence>
<evidence type="ECO:0000305" key="7"/>
<organism>
    <name type="scientific">Bos taurus</name>
    <name type="common">Bovine</name>
    <dbReference type="NCBI Taxonomy" id="9913"/>
    <lineage>
        <taxon>Eukaryota</taxon>
        <taxon>Metazoa</taxon>
        <taxon>Chordata</taxon>
        <taxon>Craniata</taxon>
        <taxon>Vertebrata</taxon>
        <taxon>Euteleostomi</taxon>
        <taxon>Mammalia</taxon>
        <taxon>Eutheria</taxon>
        <taxon>Laurasiatheria</taxon>
        <taxon>Artiodactyla</taxon>
        <taxon>Ruminantia</taxon>
        <taxon>Pecora</taxon>
        <taxon>Bovidae</taxon>
        <taxon>Bovinae</taxon>
        <taxon>Bos</taxon>
    </lineage>
</organism>
<sequence>MASAPTSKYNSHSLENESIKRTSRDGVNRDVGETLPRLPGEIRITDKEVIYICPFNGPIKGRVYITNYRLYLRSLETDSALILDVPLGVISRIEKMGGATSRGENSYGLDITCKDLRNLRFALKQEGHSRRDMFEILTRYAFPLAHSLPIFAFLNEEKFNVDGWTVYNPVEEYRRQGLPNHHWRITFINKCYKLCDTYPALLVVPYRASDEDLRRVATFRSRNRIPVLSWIHPENKTVIVRCSQPLVGMSGKRNKEDERYLDVIRETNRQVNKLTIYDARPNVNAVANKATGGGYESDDVYHNAELFFLDIHNIHVMRESLKKVKDIVYPNVEESHWLSSLESTHWLEHIKLVLTGAIQVADRVSSGKSSVVVHCSDGWDRTAQLTSLAMLMLDSFYRSIEGFEILVQKEWISFGHKFASRIGHGDKNHADADRSPIFLQFIDCVWQMSKQFPTAFEFNERFLITILDHLYSCRFGTFLYNCESAREKQKVTERTVSLWSLINSNKDKFKNPFYTKEINRVLYPVASMRHLELWVNYYIRWNPRIKQQQPNPVEQRYMELLALRDEYIKRLDELQLANSAKLSDPSASPSSPSQMMPHVQTHF</sequence>
<name>MTM1_BOVIN</name>
<dbReference type="EC" id="3.1.3.95" evidence="1"/>
<dbReference type="EMBL" id="BC148078">
    <property type="protein sequence ID" value="AAI48079.1"/>
    <property type="status" value="ALT_INIT"/>
    <property type="molecule type" value="mRNA"/>
</dbReference>
<dbReference type="RefSeq" id="NP_001193354.1">
    <property type="nucleotide sequence ID" value="NM_001206425.2"/>
</dbReference>
<dbReference type="SMR" id="A6QLT4"/>
<dbReference type="FunCoup" id="A6QLT4">
    <property type="interactions" value="852"/>
</dbReference>
<dbReference type="STRING" id="9913.ENSBTAP00000066432"/>
<dbReference type="PaxDb" id="9913-ENSBTAP00000018789"/>
<dbReference type="Ensembl" id="ENSBTAT00000068194.1">
    <property type="protein sequence ID" value="ENSBTAP00000066432.1"/>
    <property type="gene ID" value="ENSBTAG00000014138.7"/>
</dbReference>
<dbReference type="GeneID" id="533622"/>
<dbReference type="KEGG" id="bta:533622"/>
<dbReference type="CTD" id="4534"/>
<dbReference type="VEuPathDB" id="HostDB:ENSBTAG00000014138"/>
<dbReference type="VGNC" id="VGNC:31735">
    <property type="gene designation" value="MTM1"/>
</dbReference>
<dbReference type="eggNOG" id="KOG4471">
    <property type="taxonomic scope" value="Eukaryota"/>
</dbReference>
<dbReference type="GeneTree" id="ENSGT00940000157029"/>
<dbReference type="HOGENOM" id="CLU_001839_4_1_1"/>
<dbReference type="InParanoid" id="A6QLT4"/>
<dbReference type="OMA" id="PFRATDE"/>
<dbReference type="OrthoDB" id="271628at2759"/>
<dbReference type="TreeFam" id="TF315197"/>
<dbReference type="Reactome" id="R-BTA-1660499">
    <property type="pathway name" value="Synthesis of PIPs at the plasma membrane"/>
</dbReference>
<dbReference type="Reactome" id="R-BTA-1660516">
    <property type="pathway name" value="Synthesis of PIPs at the early endosome membrane"/>
</dbReference>
<dbReference type="Reactome" id="R-BTA-1660517">
    <property type="pathway name" value="Synthesis of PIPs at the late endosome membrane"/>
</dbReference>
<dbReference type="Proteomes" id="UP000009136">
    <property type="component" value="Chromosome X"/>
</dbReference>
<dbReference type="Bgee" id="ENSBTAG00000014138">
    <property type="expression patterns" value="Expressed in oocyte and 106 other cell types or tissues"/>
</dbReference>
<dbReference type="GO" id="GO:0005737">
    <property type="term" value="C:cytoplasm"/>
    <property type="evidence" value="ECO:0000250"/>
    <property type="project" value="UniProtKB"/>
</dbReference>
<dbReference type="GO" id="GO:0030175">
    <property type="term" value="C:filopodium"/>
    <property type="evidence" value="ECO:0000250"/>
    <property type="project" value="UniProtKB"/>
</dbReference>
<dbReference type="GO" id="GO:0005770">
    <property type="term" value="C:late endosome"/>
    <property type="evidence" value="ECO:0000250"/>
    <property type="project" value="UniProtKB"/>
</dbReference>
<dbReference type="GO" id="GO:0016020">
    <property type="term" value="C:membrane"/>
    <property type="evidence" value="ECO:0000318"/>
    <property type="project" value="GO_Central"/>
</dbReference>
<dbReference type="GO" id="GO:0005886">
    <property type="term" value="C:plasma membrane"/>
    <property type="evidence" value="ECO:0000250"/>
    <property type="project" value="UniProtKB"/>
</dbReference>
<dbReference type="GO" id="GO:0001726">
    <property type="term" value="C:ruffle"/>
    <property type="evidence" value="ECO:0000250"/>
    <property type="project" value="UniProtKB"/>
</dbReference>
<dbReference type="GO" id="GO:0030017">
    <property type="term" value="C:sarcomere"/>
    <property type="evidence" value="ECO:0007669"/>
    <property type="project" value="UniProtKB-SubCell"/>
</dbReference>
<dbReference type="GO" id="GO:0019215">
    <property type="term" value="F:intermediate filament binding"/>
    <property type="evidence" value="ECO:0000250"/>
    <property type="project" value="UniProtKB"/>
</dbReference>
<dbReference type="GO" id="GO:0035091">
    <property type="term" value="F:phosphatidylinositol binding"/>
    <property type="evidence" value="ECO:0000250"/>
    <property type="project" value="UniProtKB"/>
</dbReference>
<dbReference type="GO" id="GO:0052629">
    <property type="term" value="F:phosphatidylinositol-3,5-bisphosphate 3-phosphatase activity"/>
    <property type="evidence" value="ECO:0000250"/>
    <property type="project" value="UniProtKB"/>
</dbReference>
<dbReference type="GO" id="GO:0004438">
    <property type="term" value="F:phosphatidylinositol-3-phosphate phosphatase activity"/>
    <property type="evidence" value="ECO:0000250"/>
    <property type="project" value="UniProtKB"/>
</dbReference>
<dbReference type="GO" id="GO:0004721">
    <property type="term" value="F:phosphoprotein phosphatase activity"/>
    <property type="evidence" value="ECO:0000250"/>
    <property type="project" value="UniProtKB"/>
</dbReference>
<dbReference type="GO" id="GO:0008333">
    <property type="term" value="P:endosome to lysosome transport"/>
    <property type="evidence" value="ECO:0000250"/>
    <property type="project" value="UniProtKB"/>
</dbReference>
<dbReference type="GO" id="GO:0045109">
    <property type="term" value="P:intermediate filament organization"/>
    <property type="evidence" value="ECO:0000250"/>
    <property type="project" value="UniProtKB"/>
</dbReference>
<dbReference type="GO" id="GO:0048311">
    <property type="term" value="P:mitochondrion distribution"/>
    <property type="evidence" value="ECO:0000250"/>
    <property type="project" value="UniProtKB"/>
</dbReference>
<dbReference type="GO" id="GO:0007005">
    <property type="term" value="P:mitochondrion organization"/>
    <property type="evidence" value="ECO:0000250"/>
    <property type="project" value="UniProtKB"/>
</dbReference>
<dbReference type="GO" id="GO:0046716">
    <property type="term" value="P:muscle cell cellular homeostasis"/>
    <property type="evidence" value="ECO:0000318"/>
    <property type="project" value="GO_Central"/>
</dbReference>
<dbReference type="GO" id="GO:1902902">
    <property type="term" value="P:negative regulation of autophagosome assembly"/>
    <property type="evidence" value="ECO:0000318"/>
    <property type="project" value="GO_Central"/>
</dbReference>
<dbReference type="GO" id="GO:0046856">
    <property type="term" value="P:phosphatidylinositol dephosphorylation"/>
    <property type="evidence" value="ECO:0000250"/>
    <property type="project" value="UniProtKB"/>
</dbReference>
<dbReference type="GO" id="GO:0006470">
    <property type="term" value="P:protein dephosphorylation"/>
    <property type="evidence" value="ECO:0000250"/>
    <property type="project" value="UniProtKB"/>
</dbReference>
<dbReference type="GO" id="GO:0015031">
    <property type="term" value="P:protein transport"/>
    <property type="evidence" value="ECO:0007669"/>
    <property type="project" value="UniProtKB-KW"/>
</dbReference>
<dbReference type="GO" id="GO:0044088">
    <property type="term" value="P:regulation of vacuole organization"/>
    <property type="evidence" value="ECO:0000250"/>
    <property type="project" value="UniProtKB"/>
</dbReference>
<dbReference type="CDD" id="cd13355">
    <property type="entry name" value="PH-GRAM_MTM1"/>
    <property type="match status" value="1"/>
</dbReference>
<dbReference type="FunFam" id="2.30.29.30:FF:000038">
    <property type="entry name" value="Myotubularin 1, isoform CRA_a"/>
    <property type="match status" value="1"/>
</dbReference>
<dbReference type="Gene3D" id="2.30.29.30">
    <property type="entry name" value="Pleckstrin-homology domain (PH domain)/Phosphotyrosine-binding domain (PTB)"/>
    <property type="match status" value="1"/>
</dbReference>
<dbReference type="InterPro" id="IPR004182">
    <property type="entry name" value="GRAM"/>
</dbReference>
<dbReference type="InterPro" id="IPR030564">
    <property type="entry name" value="Myotubularin"/>
</dbReference>
<dbReference type="InterPro" id="IPR010569">
    <property type="entry name" value="Myotubularin-like_Pase_dom"/>
</dbReference>
<dbReference type="InterPro" id="IPR011993">
    <property type="entry name" value="PH-like_dom_sf"/>
</dbReference>
<dbReference type="InterPro" id="IPR029021">
    <property type="entry name" value="Prot-tyrosine_phosphatase-like"/>
</dbReference>
<dbReference type="InterPro" id="IPR016130">
    <property type="entry name" value="Tyr_Pase_AS"/>
</dbReference>
<dbReference type="InterPro" id="IPR003595">
    <property type="entry name" value="Tyr_Pase_cat"/>
</dbReference>
<dbReference type="InterPro" id="IPR000387">
    <property type="entry name" value="Tyr_Pase_dom"/>
</dbReference>
<dbReference type="PANTHER" id="PTHR10807:SF69">
    <property type="entry name" value="MYOTUBULARIN"/>
    <property type="match status" value="1"/>
</dbReference>
<dbReference type="PANTHER" id="PTHR10807">
    <property type="entry name" value="MYOTUBULARIN-RELATED"/>
    <property type="match status" value="1"/>
</dbReference>
<dbReference type="Pfam" id="PF02893">
    <property type="entry name" value="GRAM"/>
    <property type="match status" value="1"/>
</dbReference>
<dbReference type="Pfam" id="PF06602">
    <property type="entry name" value="Myotub-related"/>
    <property type="match status" value="1"/>
</dbReference>
<dbReference type="SMART" id="SM00568">
    <property type="entry name" value="GRAM"/>
    <property type="match status" value="1"/>
</dbReference>
<dbReference type="SMART" id="SM00404">
    <property type="entry name" value="PTPc_motif"/>
    <property type="match status" value="1"/>
</dbReference>
<dbReference type="SUPFAM" id="SSF52799">
    <property type="entry name" value="(Phosphotyrosine protein) phosphatases II"/>
    <property type="match status" value="1"/>
</dbReference>
<dbReference type="SUPFAM" id="SSF50729">
    <property type="entry name" value="PH domain-like"/>
    <property type="match status" value="1"/>
</dbReference>
<dbReference type="PROSITE" id="PS51339">
    <property type="entry name" value="PPASE_MYOTUBULARIN"/>
    <property type="match status" value="1"/>
</dbReference>
<dbReference type="PROSITE" id="PS00383">
    <property type="entry name" value="TYR_PHOSPHATASE_1"/>
    <property type="match status" value="1"/>
</dbReference>
<dbReference type="PROSITE" id="PS50056">
    <property type="entry name" value="TYR_PHOSPHATASE_2"/>
    <property type="match status" value="1"/>
</dbReference>
<comment type="function">
    <text evidence="1">Lipid phosphatase which dephosphorylates phosphatidylinositol 3-monophosphate (PI3P) and phosphatidylinositol 3,5-bisphosphate (PI(3,5)P2). Has also been shown to dephosphorylate phosphotyrosine- and phosphoserine-containing peptides. Negatively regulates EGFR degradation through regulation of EGFR trafficking from the late endosome to the lysosome. Plays a role in vacuolar formation and morphology. Regulates desmin intermediate filament assembly and architecture. Plays a role in mitochondrial morphology and positioning. Required for skeletal muscle maintenance but not for myogenesis. In skeletal muscles, stabilizes MTMR12 protein levels.</text>
</comment>
<comment type="catalytic activity">
    <reaction evidence="1">
        <text>a 1,2-diacyl-sn-glycero-3-phospho-(1D-myo-inositol-3-phosphate) + H2O = a 1,2-diacyl-sn-glycero-3-phospho-(1D-myo-inositol) + phosphate</text>
        <dbReference type="Rhea" id="RHEA:12316"/>
        <dbReference type="ChEBI" id="CHEBI:15377"/>
        <dbReference type="ChEBI" id="CHEBI:43474"/>
        <dbReference type="ChEBI" id="CHEBI:57880"/>
        <dbReference type="ChEBI" id="CHEBI:58088"/>
    </reaction>
</comment>
<comment type="catalytic activity">
    <reaction evidence="1">
        <text>a 1,2-diacyl-sn-glycero-3-phospho-(1D-myo-inositol-3,5-bisphosphate) + H2O = a 1,2-diacyl-sn-glycero-3-phospho-(1D-myo-inositol-5-phosphate) + phosphate</text>
        <dbReference type="Rhea" id="RHEA:39019"/>
        <dbReference type="ChEBI" id="CHEBI:15377"/>
        <dbReference type="ChEBI" id="CHEBI:43474"/>
        <dbReference type="ChEBI" id="CHEBI:57795"/>
        <dbReference type="ChEBI" id="CHEBI:57923"/>
        <dbReference type="EC" id="3.1.3.95"/>
    </reaction>
</comment>
<comment type="catalytic activity">
    <reaction evidence="1">
        <text>1,2-dioctanoyl-sn-glycero-3-phospho-(1-D-myo-inositol-3-phosphate) + H2O = 1,2-dioctanoyl-sn-glycero-3-phospho-(1D-myo-inositol) + phosphate</text>
        <dbReference type="Rhea" id="RHEA:42328"/>
        <dbReference type="ChEBI" id="CHEBI:15377"/>
        <dbReference type="ChEBI" id="CHEBI:43474"/>
        <dbReference type="ChEBI" id="CHEBI:65221"/>
        <dbReference type="ChEBI" id="CHEBI:78934"/>
    </reaction>
</comment>
<comment type="catalytic activity">
    <reaction evidence="1">
        <text>1,2-dioctanoyl-sn-glycero-3-phospho-(1D-myo-inositol-3,5-bisphosphate) + H2O = 1,2-dioctanoyl-sn-glycero-3-phospho-(1D-myo-inositol-5-phosphate) + phosphate</text>
        <dbReference type="Rhea" id="RHEA:45632"/>
        <dbReference type="ChEBI" id="CHEBI:15377"/>
        <dbReference type="ChEBI" id="CHEBI:43474"/>
        <dbReference type="ChEBI" id="CHEBI:78911"/>
        <dbReference type="ChEBI" id="CHEBI:85342"/>
    </reaction>
</comment>
<comment type="catalytic activity">
    <reaction evidence="1">
        <text>1,2-dihexadecanoyl-sn-glycero-3-phospho-(1D-myo-inositol-3,5-phosphate) + H2O = 1,2-dihexadecanoyl-sn-glycero-3-phospho-(1D-myo-inositol-5-phosphate) + phosphate</text>
        <dbReference type="Rhea" id="RHEA:45636"/>
        <dbReference type="ChEBI" id="CHEBI:15377"/>
        <dbReference type="ChEBI" id="CHEBI:43474"/>
        <dbReference type="ChEBI" id="CHEBI:78994"/>
        <dbReference type="ChEBI" id="CHEBI:84968"/>
    </reaction>
</comment>
<comment type="activity regulation">
    <text evidence="1">Allosterically activated by phosphatidylinositol 5-phosphate (PI5P).</text>
</comment>
<comment type="subunit">
    <text evidence="1">Heterodimer with MTMR12. Interacts with KMT2A/MLL1 (via SET domain). Interacts with DES in skeletal muscle but not in cardiac muscle. Interacts with SPEG.</text>
</comment>
<comment type="subcellular location">
    <subcellularLocation>
        <location evidence="1">Cytoplasm</location>
    </subcellularLocation>
    <subcellularLocation>
        <location evidence="1">Cell membrane</location>
        <topology evidence="1">Peripheral membrane protein</topology>
    </subcellularLocation>
    <subcellularLocation>
        <location evidence="1">Cell projection</location>
        <location evidence="1">Filopodium</location>
    </subcellularLocation>
    <subcellularLocation>
        <location evidence="1">Cell projection</location>
        <location evidence="1">Ruffle</location>
    </subcellularLocation>
    <subcellularLocation>
        <location evidence="1">Late endosome</location>
    </subcellularLocation>
    <subcellularLocation>
        <location evidence="3">Cytoplasm</location>
        <location evidence="3">Myofibril</location>
        <location evidence="3">Sarcomere</location>
    </subcellularLocation>
    <text evidence="1 3">Localizes as a dense cytoplasmic network. Also localizes to the plasma membrane, including plasma membrane extensions such as filopodia and ruffles. Predominantly located in the cytoplasm following interaction with MTMR12. Recruited to the late endosome following EGF stimulation (By similarity). In skeletal muscles, co-localizes with MTMR12 in the sarcomere (By similarity).</text>
</comment>
<comment type="domain">
    <text evidence="1">The GRAM domain mediates binding to PI(3,5)P2 and, with lower affinity, to other phosphoinositides.</text>
</comment>
<comment type="similarity">
    <text evidence="7">Belongs to the protein-tyrosine phosphatase family. Non-receptor class myotubularin subfamily.</text>
</comment>
<comment type="sequence caution" evidence="7">
    <conflict type="erroneous initiation">
        <sequence resource="EMBL-CDS" id="AAI48079"/>
    </conflict>
    <text>Extended N-terminus.</text>
</comment>
<reference key="1">
    <citation type="submission" date="2007-06" db="EMBL/GenBank/DDBJ databases">
        <authorList>
            <consortium name="NIH - Mammalian Gene Collection (MGC) project"/>
        </authorList>
    </citation>
    <scope>NUCLEOTIDE SEQUENCE [LARGE SCALE MRNA]</scope>
    <source>
        <strain>Hereford</strain>
        <tissue>Hypothalamus</tissue>
    </source>
</reference>